<proteinExistence type="evidence at protein level"/>
<organism>
    <name type="scientific">Arabidopsis thaliana</name>
    <name type="common">Mouse-ear cress</name>
    <dbReference type="NCBI Taxonomy" id="3702"/>
    <lineage>
        <taxon>Eukaryota</taxon>
        <taxon>Viridiplantae</taxon>
        <taxon>Streptophyta</taxon>
        <taxon>Embryophyta</taxon>
        <taxon>Tracheophyta</taxon>
        <taxon>Spermatophyta</taxon>
        <taxon>Magnoliopsida</taxon>
        <taxon>eudicotyledons</taxon>
        <taxon>Gunneridae</taxon>
        <taxon>Pentapetalae</taxon>
        <taxon>rosids</taxon>
        <taxon>malvids</taxon>
        <taxon>Brassicales</taxon>
        <taxon>Brassicaceae</taxon>
        <taxon>Camelineae</taxon>
        <taxon>Arabidopsis</taxon>
    </lineage>
</organism>
<sequence length="460" mass="50570">MPLSATADTSKTVKLERYNSYLRKIHSTKVLNASSKVLFRATLLVALVLVLIFAINYPPLSDSRAAAAHHLHRRSFLSTGLFSSSSSSSSIGGAAWEKRVRQSSTAKRPHGLSVLVTGAAGFVGSHCSLALRKRGDGVLGFDNFNDYYDPSLKRARQELLEKQQVFIVEGDLNDGPLLRKLFDVVPFTHILHLAAQAGVRYAMKNPQSYIASNIAGFVNLLEVAKAANPQPAIVWASSSSVYGLNTENPFSEEHRTDQPASLYAATKKAGEEIAHTYNHIYGLSLTGLRFFTVYGPWGRPDMAYFFFTKDILHGKSIDIYRTQDNQEVARDFTYIDDIVKGCVGALDTAEKSTGSGGKKRGQAQLRVYNLGNTSPVPVGRLVSILEGLLGTKAKKHLIKMPRNGDVPYTHANVSLAYKDFGYKPTTDLAAGLRKFVKWYVGYYGIQPRVKKETSHAEDSA</sequence>
<feature type="chain" id="PRO_0000292601" description="UDP-glucuronate 4-epimerase 6">
    <location>
        <begin position="1"/>
        <end position="460"/>
    </location>
</feature>
<feature type="transmembrane region" description="Helical" evidence="2">
    <location>
        <begin position="41"/>
        <end position="61"/>
    </location>
</feature>
<feature type="transmembrane region" description="Helical" evidence="2">
    <location>
        <begin position="111"/>
        <end position="131"/>
    </location>
</feature>
<feature type="active site" description="Proton acceptor" evidence="1">
    <location>
        <position position="263"/>
    </location>
</feature>
<feature type="binding site" evidence="1">
    <location>
        <begin position="113"/>
        <end position="144"/>
    </location>
    <ligand>
        <name>NAD(+)</name>
        <dbReference type="ChEBI" id="CHEBI:57540"/>
    </ligand>
</feature>
<evidence type="ECO:0000250" key="1"/>
<evidence type="ECO:0000255" key="2"/>
<evidence type="ECO:0000269" key="3">
    <source>
    </source>
</evidence>
<evidence type="ECO:0000269" key="4">
    <source>
    </source>
</evidence>
<evidence type="ECO:0000269" key="5">
    <source>
    </source>
</evidence>
<evidence type="ECO:0000305" key="6"/>
<protein>
    <recommendedName>
        <fullName>UDP-glucuronate 4-epimerase 6</fullName>
        <ecNumber>5.1.3.6</ecNumber>
    </recommendedName>
    <alternativeName>
        <fullName>UDP-glucuronic acid epimerase 6</fullName>
        <shortName>AtUGlcAE2</shortName>
    </alternativeName>
</protein>
<reference key="1">
    <citation type="journal article" date="2004" name="FEBS Lett.">
        <title>Identification and characterization of a UDP-D-glucuronate 4-epimerase in Arabidopsis.</title>
        <authorList>
            <person name="Usadel B."/>
            <person name="Schlueter U."/>
            <person name="Moelhoej M."/>
            <person name="Gipmans M."/>
            <person name="Verma R."/>
            <person name="Kossmann J."/>
            <person name="Reiter W.-D."/>
            <person name="Pauly M."/>
        </authorList>
    </citation>
    <scope>NUCLEOTIDE SEQUENCE [GENOMIC DNA]</scope>
    <scope>FUNCTION</scope>
    <scope>TISSUE SPECIFICITY</scope>
    <scope>BIOPHYSICOCHEMICAL PROPERTIES</scope>
</reference>
<reference key="2">
    <citation type="journal article" date="2000" name="DNA Res.">
        <title>Structural analysis of Arabidopsis thaliana chromosome 3. II. Sequence features of the 4,251,695 bp regions covered by 90 P1, TAC and BAC clones.</title>
        <authorList>
            <person name="Kaneko T."/>
            <person name="Katoh T."/>
            <person name="Sato S."/>
            <person name="Nakamura Y."/>
            <person name="Asamizu E."/>
            <person name="Tabata S."/>
        </authorList>
    </citation>
    <scope>NUCLEOTIDE SEQUENCE [LARGE SCALE GENOMIC DNA]</scope>
    <source>
        <strain>cv. Columbia</strain>
    </source>
</reference>
<reference key="3">
    <citation type="journal article" date="2017" name="Plant J.">
        <title>Araport11: a complete reannotation of the Arabidopsis thaliana reference genome.</title>
        <authorList>
            <person name="Cheng C.Y."/>
            <person name="Krishnakumar V."/>
            <person name="Chan A.P."/>
            <person name="Thibaud-Nissen F."/>
            <person name="Schobel S."/>
            <person name="Town C.D."/>
        </authorList>
    </citation>
    <scope>GENOME REANNOTATION</scope>
    <source>
        <strain>cv. Columbia</strain>
    </source>
</reference>
<reference key="4">
    <citation type="submission" date="1998-08" db="EMBL/GenBank/DDBJ databases">
        <title>Signal peptide selection derived cDNAs from Arabidopsis thaliana leaves and guard cells.</title>
        <authorList>
            <person name="Stracke R."/>
            <person name="Palme K."/>
        </authorList>
    </citation>
    <scope>NUCLEOTIDE SEQUENCE [LARGE SCALE MRNA]</scope>
</reference>
<reference key="5">
    <citation type="journal article" date="2003" name="Science">
        <title>Empirical analysis of transcriptional activity in the Arabidopsis genome.</title>
        <authorList>
            <person name="Yamada K."/>
            <person name="Lim J."/>
            <person name="Dale J.M."/>
            <person name="Chen H."/>
            <person name="Shinn P."/>
            <person name="Palm C.J."/>
            <person name="Southwick A.M."/>
            <person name="Wu H.C."/>
            <person name="Kim C.J."/>
            <person name="Nguyen M."/>
            <person name="Pham P.K."/>
            <person name="Cheuk R.F."/>
            <person name="Karlin-Newmann G."/>
            <person name="Liu S.X."/>
            <person name="Lam B."/>
            <person name="Sakano H."/>
            <person name="Wu T."/>
            <person name="Yu G."/>
            <person name="Miranda M."/>
            <person name="Quach H.L."/>
            <person name="Tripp M."/>
            <person name="Chang C.H."/>
            <person name="Lee J.M."/>
            <person name="Toriumi M.J."/>
            <person name="Chan M.M."/>
            <person name="Tang C.C."/>
            <person name="Onodera C.S."/>
            <person name="Deng J.M."/>
            <person name="Akiyama K."/>
            <person name="Ansari Y."/>
            <person name="Arakawa T."/>
            <person name="Banh J."/>
            <person name="Banno F."/>
            <person name="Bowser L."/>
            <person name="Brooks S.Y."/>
            <person name="Carninci P."/>
            <person name="Chao Q."/>
            <person name="Choy N."/>
            <person name="Enju A."/>
            <person name="Goldsmith A.D."/>
            <person name="Gurjal M."/>
            <person name="Hansen N.F."/>
            <person name="Hayashizaki Y."/>
            <person name="Johnson-Hopson C."/>
            <person name="Hsuan V.W."/>
            <person name="Iida K."/>
            <person name="Karnes M."/>
            <person name="Khan S."/>
            <person name="Koesema E."/>
            <person name="Ishida J."/>
            <person name="Jiang P.X."/>
            <person name="Jones T."/>
            <person name="Kawai J."/>
            <person name="Kamiya A."/>
            <person name="Meyers C."/>
            <person name="Nakajima M."/>
            <person name="Narusaka M."/>
            <person name="Seki M."/>
            <person name="Sakurai T."/>
            <person name="Satou M."/>
            <person name="Tamse R."/>
            <person name="Vaysberg M."/>
            <person name="Wallender E.K."/>
            <person name="Wong C."/>
            <person name="Yamamura Y."/>
            <person name="Yuan S."/>
            <person name="Shinozaki K."/>
            <person name="Davis R.W."/>
            <person name="Theologis A."/>
            <person name="Ecker J.R."/>
        </authorList>
    </citation>
    <scope>NUCLEOTIDE SEQUENCE [LARGE SCALE MRNA]</scope>
    <source>
        <strain>cv. Columbia</strain>
    </source>
</reference>
<reference key="6">
    <citation type="journal article" date="2001" name="Plant Mol. Biol.">
        <title>Molecular genetics of nucleotide sugar interconversion pathways in plants.</title>
        <authorList>
            <person name="Reiter W.-D."/>
            <person name="Vanzin G.F."/>
        </authorList>
    </citation>
    <scope>IDENTIFICATION</scope>
    <scope>NOMENCLATURE</scope>
</reference>
<reference key="7">
    <citation type="journal article" date="2004" name="Plant Physiol.">
        <title>The biosynthesis of D-galacturonate in plants. Functional cloning and characterization of a membrane-anchored UDP-D-glucuronate 4-epimerase from Arabidopsis.</title>
        <authorList>
            <person name="Moelhoej M."/>
            <person name="Verma R."/>
            <person name="Reiter W.-D."/>
        </authorList>
    </citation>
    <scope>IDENTIFICATION</scope>
    <scope>TISSUE SPECIFICITY</scope>
</reference>
<reference key="8">
    <citation type="journal article" date="2004" name="Plant Physiol.">
        <title>The biosynthesis of UDP-galacturonic acid in plants. Functional cloning and characterization of Arabidopsis UDP-D-glucuronic acid 4-epimerase.</title>
        <authorList>
            <person name="Gu X."/>
            <person name="Bar-Peled M."/>
        </authorList>
    </citation>
    <scope>IDENTIFICATION</scope>
    <scope>TISSUE SPECIFICITY</scope>
    <scope>NOMENCLATURE</scope>
</reference>
<comment type="function">
    <text evidence="3">Involved in the synthesis of the negatively charged monosaccharide that forms the backbone of pectic cell wall components.</text>
</comment>
<comment type="catalytic activity">
    <reaction>
        <text>UDP-alpha-D-glucuronate = UDP-alpha-D-galacturonate</text>
        <dbReference type="Rhea" id="RHEA:11404"/>
        <dbReference type="ChEBI" id="CHEBI:57635"/>
        <dbReference type="ChEBI" id="CHEBI:58052"/>
        <dbReference type="EC" id="5.1.3.6"/>
    </reaction>
</comment>
<comment type="biophysicochemical properties">
    <kinetics>
        <KM evidence="3">0.23 mM for UDP-glucuronate</KM>
        <text>No activity with UDP-Galactose, UDP- Glucose or UDP-Xylose.</text>
    </kinetics>
    <phDependence>
        <text evidence="3">Optimum pH is 7.9. Active from pH 6 to 8.9.</text>
    </phDependence>
</comment>
<comment type="subunit">
    <text evidence="1">Homodimer.</text>
</comment>
<comment type="interaction">
    <interactant intactId="EBI-2297116">
        <id>Q9LIS3</id>
    </interactant>
    <interactant intactId="EBI-979475">
        <id>Q38869</id>
        <label>CPK4</label>
    </interactant>
    <organismsDiffer>false</organismsDiffer>
    <experiments>4</experiments>
</comment>
<comment type="subcellular location">
    <subcellularLocation>
        <location evidence="6">Golgi apparatus</location>
        <location evidence="6">Golgi stack membrane</location>
        <topology evidence="6">Multi-pass membrane protein</topology>
    </subcellularLocation>
</comment>
<comment type="tissue specificity">
    <text evidence="3 4 5">In roots, leaf veins, siliques, flowers, pollen and stems.</text>
</comment>
<comment type="similarity">
    <text evidence="6">Belongs to the NAD(P)-dependent epimerase/dehydratase family.</text>
</comment>
<dbReference type="EC" id="5.1.3.6"/>
<dbReference type="EMBL" id="AJ879893">
    <property type="protein sequence ID" value="CAI53858.1"/>
    <property type="molecule type" value="Genomic_DNA"/>
</dbReference>
<dbReference type="EMBL" id="AP001297">
    <property type="protein sequence ID" value="BAB03000.1"/>
    <property type="molecule type" value="Genomic_DNA"/>
</dbReference>
<dbReference type="EMBL" id="CP002686">
    <property type="protein sequence ID" value="AEE76818.1"/>
    <property type="molecule type" value="Genomic_DNA"/>
</dbReference>
<dbReference type="EMBL" id="AF083691">
    <property type="protein sequence ID" value="AAN60250.1"/>
    <property type="molecule type" value="mRNA"/>
</dbReference>
<dbReference type="EMBL" id="AF370210">
    <property type="protein sequence ID" value="AAK44025.1"/>
    <property type="molecule type" value="mRNA"/>
</dbReference>
<dbReference type="EMBL" id="AY056117">
    <property type="protein sequence ID" value="AAL07003.1"/>
    <property type="molecule type" value="mRNA"/>
</dbReference>
<dbReference type="EMBL" id="AY062625">
    <property type="protein sequence ID" value="AAL32703.1"/>
    <property type="molecule type" value="mRNA"/>
</dbReference>
<dbReference type="EMBL" id="AY133771">
    <property type="protein sequence ID" value="AAM91705.1"/>
    <property type="molecule type" value="mRNA"/>
</dbReference>
<dbReference type="RefSeq" id="NP_189024.1">
    <property type="nucleotide sequence ID" value="NM_113287.3"/>
</dbReference>
<dbReference type="SMR" id="Q9LIS3"/>
<dbReference type="BioGRID" id="7297">
    <property type="interactions" value="1"/>
</dbReference>
<dbReference type="FunCoup" id="Q9LIS3">
    <property type="interactions" value="410"/>
</dbReference>
<dbReference type="IntAct" id="Q9LIS3">
    <property type="interactions" value="1"/>
</dbReference>
<dbReference type="STRING" id="3702.Q9LIS3"/>
<dbReference type="iPTMnet" id="Q9LIS3"/>
<dbReference type="PaxDb" id="3702-AT3G23820.1"/>
<dbReference type="ProteomicsDB" id="230471"/>
<dbReference type="EnsemblPlants" id="AT3G23820.1">
    <property type="protein sequence ID" value="AT3G23820.1"/>
    <property type="gene ID" value="AT3G23820"/>
</dbReference>
<dbReference type="GeneID" id="821965"/>
<dbReference type="Gramene" id="AT3G23820.1">
    <property type="protein sequence ID" value="AT3G23820.1"/>
    <property type="gene ID" value="AT3G23820"/>
</dbReference>
<dbReference type="KEGG" id="ath:AT3G23820"/>
<dbReference type="Araport" id="AT3G23820"/>
<dbReference type="TAIR" id="AT3G23820">
    <property type="gene designation" value="GAE6"/>
</dbReference>
<dbReference type="eggNOG" id="KOG1371">
    <property type="taxonomic scope" value="Eukaryota"/>
</dbReference>
<dbReference type="HOGENOM" id="CLU_007383_1_2_1"/>
<dbReference type="InParanoid" id="Q9LIS3"/>
<dbReference type="OMA" id="FAINYPP"/>
<dbReference type="OrthoDB" id="202470at2759"/>
<dbReference type="PhylomeDB" id="Q9LIS3"/>
<dbReference type="BRENDA" id="5.1.3.6">
    <property type="organism ID" value="399"/>
</dbReference>
<dbReference type="PRO" id="PR:Q9LIS3"/>
<dbReference type="Proteomes" id="UP000006548">
    <property type="component" value="Chromosome 3"/>
</dbReference>
<dbReference type="ExpressionAtlas" id="Q9LIS3">
    <property type="expression patterns" value="baseline and differential"/>
</dbReference>
<dbReference type="GO" id="GO:0005768">
    <property type="term" value="C:endosome"/>
    <property type="evidence" value="ECO:0007005"/>
    <property type="project" value="TAIR"/>
</dbReference>
<dbReference type="GO" id="GO:0005794">
    <property type="term" value="C:Golgi apparatus"/>
    <property type="evidence" value="ECO:0000314"/>
    <property type="project" value="TAIR"/>
</dbReference>
<dbReference type="GO" id="GO:0032580">
    <property type="term" value="C:Golgi cisterna membrane"/>
    <property type="evidence" value="ECO:0007669"/>
    <property type="project" value="UniProtKB-SubCell"/>
</dbReference>
<dbReference type="GO" id="GO:0000138">
    <property type="term" value="C:Golgi trans cisterna"/>
    <property type="evidence" value="ECO:0007005"/>
    <property type="project" value="TAIR"/>
</dbReference>
<dbReference type="GO" id="GO:0005802">
    <property type="term" value="C:trans-Golgi network"/>
    <property type="evidence" value="ECO:0007005"/>
    <property type="project" value="TAIR"/>
</dbReference>
<dbReference type="GO" id="GO:0050378">
    <property type="term" value="F:UDP-glucuronate 4-epimerase activity"/>
    <property type="evidence" value="ECO:0007669"/>
    <property type="project" value="UniProtKB-EC"/>
</dbReference>
<dbReference type="GO" id="GO:0050832">
    <property type="term" value="P:defense response to fungus"/>
    <property type="evidence" value="ECO:0000316"/>
    <property type="project" value="TAIR"/>
</dbReference>
<dbReference type="GO" id="GO:0050829">
    <property type="term" value="P:defense response to Gram-negative bacterium"/>
    <property type="evidence" value="ECO:0000316"/>
    <property type="project" value="TAIR"/>
</dbReference>
<dbReference type="GO" id="GO:0033481">
    <property type="term" value="P:galacturonate biosynthetic process"/>
    <property type="evidence" value="ECO:0000315"/>
    <property type="project" value="TAIR"/>
</dbReference>
<dbReference type="FunFam" id="3.40.50.720:FF:000198">
    <property type="entry name" value="UDP-glucuronate 4-epimerase 3"/>
    <property type="match status" value="1"/>
</dbReference>
<dbReference type="Gene3D" id="3.40.50.720">
    <property type="entry name" value="NAD(P)-binding Rossmann-like Domain"/>
    <property type="match status" value="1"/>
</dbReference>
<dbReference type="InterPro" id="IPR001509">
    <property type="entry name" value="Epimerase_deHydtase"/>
</dbReference>
<dbReference type="InterPro" id="IPR036291">
    <property type="entry name" value="NAD(P)-bd_dom_sf"/>
</dbReference>
<dbReference type="PANTHER" id="PTHR43574">
    <property type="entry name" value="EPIMERASE-RELATED"/>
    <property type="match status" value="1"/>
</dbReference>
<dbReference type="Pfam" id="PF01370">
    <property type="entry name" value="Epimerase"/>
    <property type="match status" value="1"/>
</dbReference>
<dbReference type="PRINTS" id="PR01713">
    <property type="entry name" value="NUCEPIMERASE"/>
</dbReference>
<dbReference type="SUPFAM" id="SSF51735">
    <property type="entry name" value="NAD(P)-binding Rossmann-fold domains"/>
    <property type="match status" value="1"/>
</dbReference>
<name>GAE6_ARATH</name>
<keyword id="KW-0119">Carbohydrate metabolism</keyword>
<keyword id="KW-0333">Golgi apparatus</keyword>
<keyword id="KW-0413">Isomerase</keyword>
<keyword id="KW-0472">Membrane</keyword>
<keyword id="KW-0520">NAD</keyword>
<keyword id="KW-1185">Reference proteome</keyword>
<keyword id="KW-0812">Transmembrane</keyword>
<keyword id="KW-1133">Transmembrane helix</keyword>
<accession>Q9LIS3</accession>
<accession>Q8H7G2</accession>
<gene>
    <name type="primary">GAE6</name>
    <name type="synonym">UGlcAE2</name>
    <name type="ordered locus">At3g23820</name>
    <name type="ORF">F14O13.1</name>
</gene>